<dbReference type="EC" id="4.3.2.10" evidence="1"/>
<dbReference type="EMBL" id="CP000606">
    <property type="protein sequence ID" value="ABO24069.1"/>
    <property type="molecule type" value="Genomic_DNA"/>
</dbReference>
<dbReference type="RefSeq" id="WP_011866001.1">
    <property type="nucleotide sequence ID" value="NC_009092.1"/>
</dbReference>
<dbReference type="SMR" id="A3QF21"/>
<dbReference type="STRING" id="323850.Shew_2203"/>
<dbReference type="KEGG" id="slo:Shew_2203"/>
<dbReference type="eggNOG" id="COG0107">
    <property type="taxonomic scope" value="Bacteria"/>
</dbReference>
<dbReference type="HOGENOM" id="CLU_048577_4_0_6"/>
<dbReference type="OrthoDB" id="9781903at2"/>
<dbReference type="UniPathway" id="UPA00031">
    <property type="reaction ID" value="UER00010"/>
</dbReference>
<dbReference type="Proteomes" id="UP000001558">
    <property type="component" value="Chromosome"/>
</dbReference>
<dbReference type="GO" id="GO:0005737">
    <property type="term" value="C:cytoplasm"/>
    <property type="evidence" value="ECO:0007669"/>
    <property type="project" value="UniProtKB-SubCell"/>
</dbReference>
<dbReference type="GO" id="GO:0000107">
    <property type="term" value="F:imidazoleglycerol-phosphate synthase activity"/>
    <property type="evidence" value="ECO:0007669"/>
    <property type="project" value="UniProtKB-UniRule"/>
</dbReference>
<dbReference type="GO" id="GO:0016829">
    <property type="term" value="F:lyase activity"/>
    <property type="evidence" value="ECO:0007669"/>
    <property type="project" value="UniProtKB-KW"/>
</dbReference>
<dbReference type="GO" id="GO:0000105">
    <property type="term" value="P:L-histidine biosynthetic process"/>
    <property type="evidence" value="ECO:0007669"/>
    <property type="project" value="UniProtKB-UniRule"/>
</dbReference>
<dbReference type="CDD" id="cd04731">
    <property type="entry name" value="HisF"/>
    <property type="match status" value="1"/>
</dbReference>
<dbReference type="FunFam" id="3.20.20.70:FF:000006">
    <property type="entry name" value="Imidazole glycerol phosphate synthase subunit HisF"/>
    <property type="match status" value="1"/>
</dbReference>
<dbReference type="Gene3D" id="3.20.20.70">
    <property type="entry name" value="Aldolase class I"/>
    <property type="match status" value="1"/>
</dbReference>
<dbReference type="HAMAP" id="MF_01013">
    <property type="entry name" value="HisF"/>
    <property type="match status" value="1"/>
</dbReference>
<dbReference type="InterPro" id="IPR013785">
    <property type="entry name" value="Aldolase_TIM"/>
</dbReference>
<dbReference type="InterPro" id="IPR006062">
    <property type="entry name" value="His_biosynth"/>
</dbReference>
<dbReference type="InterPro" id="IPR004651">
    <property type="entry name" value="HisF"/>
</dbReference>
<dbReference type="InterPro" id="IPR050064">
    <property type="entry name" value="IGPS_HisA/HisF"/>
</dbReference>
<dbReference type="InterPro" id="IPR011060">
    <property type="entry name" value="RibuloseP-bd_barrel"/>
</dbReference>
<dbReference type="NCBIfam" id="TIGR00735">
    <property type="entry name" value="hisF"/>
    <property type="match status" value="1"/>
</dbReference>
<dbReference type="PANTHER" id="PTHR21235:SF2">
    <property type="entry name" value="IMIDAZOLE GLYCEROL PHOSPHATE SYNTHASE HISHF"/>
    <property type="match status" value="1"/>
</dbReference>
<dbReference type="PANTHER" id="PTHR21235">
    <property type="entry name" value="IMIDAZOLE GLYCEROL PHOSPHATE SYNTHASE SUBUNIT HISF/H IGP SYNTHASE SUBUNIT HISF/H"/>
    <property type="match status" value="1"/>
</dbReference>
<dbReference type="Pfam" id="PF00977">
    <property type="entry name" value="His_biosynth"/>
    <property type="match status" value="1"/>
</dbReference>
<dbReference type="SUPFAM" id="SSF51366">
    <property type="entry name" value="Ribulose-phoshate binding barrel"/>
    <property type="match status" value="1"/>
</dbReference>
<name>HIS6_SHELP</name>
<organism>
    <name type="scientific">Shewanella loihica (strain ATCC BAA-1088 / PV-4)</name>
    <dbReference type="NCBI Taxonomy" id="323850"/>
    <lineage>
        <taxon>Bacteria</taxon>
        <taxon>Pseudomonadati</taxon>
        <taxon>Pseudomonadota</taxon>
        <taxon>Gammaproteobacteria</taxon>
        <taxon>Alteromonadales</taxon>
        <taxon>Shewanellaceae</taxon>
        <taxon>Shewanella</taxon>
    </lineage>
</organism>
<keyword id="KW-0028">Amino-acid biosynthesis</keyword>
<keyword id="KW-0963">Cytoplasm</keyword>
<keyword id="KW-0368">Histidine biosynthesis</keyword>
<keyword id="KW-0456">Lyase</keyword>
<keyword id="KW-1185">Reference proteome</keyword>
<reference key="1">
    <citation type="submission" date="2007-03" db="EMBL/GenBank/DDBJ databases">
        <title>Complete sequence of Shewanella loihica PV-4.</title>
        <authorList>
            <consortium name="US DOE Joint Genome Institute"/>
            <person name="Copeland A."/>
            <person name="Lucas S."/>
            <person name="Lapidus A."/>
            <person name="Barry K."/>
            <person name="Detter J.C."/>
            <person name="Glavina del Rio T."/>
            <person name="Hammon N."/>
            <person name="Israni S."/>
            <person name="Dalin E."/>
            <person name="Tice H."/>
            <person name="Pitluck S."/>
            <person name="Chain P."/>
            <person name="Malfatti S."/>
            <person name="Shin M."/>
            <person name="Vergez L."/>
            <person name="Schmutz J."/>
            <person name="Larimer F."/>
            <person name="Land M."/>
            <person name="Hauser L."/>
            <person name="Kyrpides N."/>
            <person name="Mikhailova N."/>
            <person name="Romine M.F."/>
            <person name="Serres G."/>
            <person name="Fredrickson J."/>
            <person name="Tiedje J."/>
            <person name="Richardson P."/>
        </authorList>
    </citation>
    <scope>NUCLEOTIDE SEQUENCE [LARGE SCALE GENOMIC DNA]</scope>
    <source>
        <strain>ATCC BAA-1088 / PV-4</strain>
    </source>
</reference>
<gene>
    <name evidence="1" type="primary">hisF</name>
    <name type="ordered locus">Shew_2203</name>
</gene>
<sequence>MLAKRIVPCLDVRDGKVVKGVQFRNHEIVGDIVPLAARYAAESADELVFYDITASAHDRVVDKSWVSRVAEQIDIPFCVAGGIKSIEQAREKLAFGADKISINSPALSDPGLIDRLQDEFGRQCIVIGIDSYYDADTDSYKVKQFTGDEAATKDTQWYTQDWVEEVQRRGCGEIVLNVMNQDGVRQGYDIKQLAMVRAICDVPLIASGGAGTMEHFLEVFTQAGVDAALAASVFHKGIIEIEALKRYLLDNGVQMRL</sequence>
<accession>A3QF21</accession>
<protein>
    <recommendedName>
        <fullName evidence="1">Imidazole glycerol phosphate synthase subunit HisF</fullName>
        <ecNumber evidence="1">4.3.2.10</ecNumber>
    </recommendedName>
    <alternativeName>
        <fullName evidence="1">IGP synthase cyclase subunit</fullName>
    </alternativeName>
    <alternativeName>
        <fullName evidence="1">IGP synthase subunit HisF</fullName>
    </alternativeName>
    <alternativeName>
        <fullName evidence="1">ImGP synthase subunit HisF</fullName>
        <shortName evidence="1">IGPS subunit HisF</shortName>
    </alternativeName>
</protein>
<proteinExistence type="inferred from homology"/>
<comment type="function">
    <text evidence="1">IGPS catalyzes the conversion of PRFAR and glutamine to IGP, AICAR and glutamate. The HisF subunit catalyzes the cyclization activity that produces IGP and AICAR from PRFAR using the ammonia provided by the HisH subunit.</text>
</comment>
<comment type="catalytic activity">
    <reaction evidence="1">
        <text>5-[(5-phospho-1-deoxy-D-ribulos-1-ylimino)methylamino]-1-(5-phospho-beta-D-ribosyl)imidazole-4-carboxamide + L-glutamine = D-erythro-1-(imidazol-4-yl)glycerol 3-phosphate + 5-amino-1-(5-phospho-beta-D-ribosyl)imidazole-4-carboxamide + L-glutamate + H(+)</text>
        <dbReference type="Rhea" id="RHEA:24793"/>
        <dbReference type="ChEBI" id="CHEBI:15378"/>
        <dbReference type="ChEBI" id="CHEBI:29985"/>
        <dbReference type="ChEBI" id="CHEBI:58278"/>
        <dbReference type="ChEBI" id="CHEBI:58359"/>
        <dbReference type="ChEBI" id="CHEBI:58475"/>
        <dbReference type="ChEBI" id="CHEBI:58525"/>
        <dbReference type="EC" id="4.3.2.10"/>
    </reaction>
</comment>
<comment type="pathway">
    <text evidence="1">Amino-acid biosynthesis; L-histidine biosynthesis; L-histidine from 5-phospho-alpha-D-ribose 1-diphosphate: step 5/9.</text>
</comment>
<comment type="subunit">
    <text evidence="1">Heterodimer of HisH and HisF.</text>
</comment>
<comment type="subcellular location">
    <subcellularLocation>
        <location evidence="1">Cytoplasm</location>
    </subcellularLocation>
</comment>
<comment type="similarity">
    <text evidence="1">Belongs to the HisA/HisF family.</text>
</comment>
<evidence type="ECO:0000255" key="1">
    <source>
        <dbReference type="HAMAP-Rule" id="MF_01013"/>
    </source>
</evidence>
<feature type="chain" id="PRO_1000063146" description="Imidazole glycerol phosphate synthase subunit HisF">
    <location>
        <begin position="1"/>
        <end position="257"/>
    </location>
</feature>
<feature type="active site" evidence="1">
    <location>
        <position position="11"/>
    </location>
</feature>
<feature type="active site" evidence="1">
    <location>
        <position position="130"/>
    </location>
</feature>